<comment type="function">
    <text evidence="2">GTP hydrolase that promotes the GTP-dependent binding of aminoacyl-tRNA to the A-site of ribosomes during protein biosynthesis.</text>
</comment>
<comment type="catalytic activity">
    <reaction evidence="2">
        <text>GTP + H2O = GDP + phosphate + H(+)</text>
        <dbReference type="Rhea" id="RHEA:19669"/>
        <dbReference type="ChEBI" id="CHEBI:15377"/>
        <dbReference type="ChEBI" id="CHEBI:15378"/>
        <dbReference type="ChEBI" id="CHEBI:37565"/>
        <dbReference type="ChEBI" id="CHEBI:43474"/>
        <dbReference type="ChEBI" id="CHEBI:58189"/>
        <dbReference type="EC" id="3.6.5.3"/>
    </reaction>
    <physiologicalReaction direction="left-to-right" evidence="2">
        <dbReference type="Rhea" id="RHEA:19670"/>
    </physiologicalReaction>
</comment>
<comment type="subcellular location">
    <subcellularLocation>
        <location>Cytoplasm</location>
    </subcellularLocation>
</comment>
<comment type="similarity">
    <text evidence="2">Belongs to the TRAFAC class translation factor GTPase superfamily. Classic translation factor GTPase family. EF-Tu/EF-1A subfamily.</text>
</comment>
<comment type="sequence caution" evidence="3">
    <conflict type="erroneous initiation">
        <sequence resource="EMBL-CDS" id="BAB60221"/>
    </conflict>
</comment>
<feature type="chain" id="PRO_0000090998" description="Elongation factor 1-alpha">
    <location>
        <begin position="1"/>
        <end position="424"/>
    </location>
</feature>
<feature type="domain" description="tr-type G">
    <location>
        <begin position="5"/>
        <end position="223"/>
    </location>
</feature>
<feature type="region of interest" description="G1" evidence="1">
    <location>
        <begin position="14"/>
        <end position="21"/>
    </location>
</feature>
<feature type="region of interest" description="G2" evidence="1">
    <location>
        <begin position="70"/>
        <end position="74"/>
    </location>
</feature>
<feature type="region of interest" description="G3" evidence="1">
    <location>
        <begin position="91"/>
        <end position="94"/>
    </location>
</feature>
<feature type="region of interest" description="G4" evidence="1">
    <location>
        <begin position="148"/>
        <end position="151"/>
    </location>
</feature>
<feature type="region of interest" description="G5" evidence="1">
    <location>
        <begin position="187"/>
        <end position="189"/>
    </location>
</feature>
<feature type="binding site" evidence="2">
    <location>
        <begin position="14"/>
        <end position="21"/>
    </location>
    <ligand>
        <name>GTP</name>
        <dbReference type="ChEBI" id="CHEBI:37565"/>
    </ligand>
</feature>
<feature type="binding site" evidence="2">
    <location>
        <position position="21"/>
    </location>
    <ligand>
        <name>Mg(2+)</name>
        <dbReference type="ChEBI" id="CHEBI:18420"/>
    </ligand>
</feature>
<feature type="binding site" evidence="2">
    <location>
        <begin position="91"/>
        <end position="95"/>
    </location>
    <ligand>
        <name>GTP</name>
        <dbReference type="ChEBI" id="CHEBI:37565"/>
    </ligand>
</feature>
<feature type="binding site" evidence="2">
    <location>
        <begin position="148"/>
        <end position="151"/>
    </location>
    <ligand>
        <name>GTP</name>
        <dbReference type="ChEBI" id="CHEBI:37565"/>
    </ligand>
</feature>
<organism>
    <name type="scientific">Thermoplasma volcanium (strain ATCC 51530 / DSM 4299 / JCM 9571 / NBRC 15438 / GSS1)</name>
    <dbReference type="NCBI Taxonomy" id="273116"/>
    <lineage>
        <taxon>Archaea</taxon>
        <taxon>Methanobacteriati</taxon>
        <taxon>Thermoplasmatota</taxon>
        <taxon>Thermoplasmata</taxon>
        <taxon>Thermoplasmatales</taxon>
        <taxon>Thermoplasmataceae</taxon>
        <taxon>Thermoplasma</taxon>
    </lineage>
</organism>
<proteinExistence type="inferred from homology"/>
<protein>
    <recommendedName>
        <fullName evidence="2">Elongation factor 1-alpha</fullName>
        <shortName evidence="2">EF-1-alpha</shortName>
        <ecNumber evidence="2">3.6.5.3</ecNumber>
    </recommendedName>
    <alternativeName>
        <fullName evidence="2">Elongation factor Tu</fullName>
        <shortName evidence="2">EF-Tu</shortName>
    </alternativeName>
</protein>
<gene>
    <name evidence="2" type="primary">tuf</name>
    <name type="ordered locus">TV1079</name>
    <name type="ORF">TVG1107082</name>
</gene>
<accession>Q979T1</accession>
<sequence length="424" mass="46935">MASQKPHLNLITIGHVDHGKSTLVGRLLFEHGEIPAHIIEEYRKEAEQKGKATFEFAWVMDRFKEERERGVTIDLAHRKFETDKYYFTLIDAPGHRDFVKNMITGTSQADAAILVISAREGEGVMEQTREHAFLARTLGVPQIVVAINKMDATEPPFSEKRFNEVKADAEKLLKTIGYKDATFVPISGYKGDNVTKPSPNMPWYKGPSLLQALDAFKVPEKPINKPLRVPVEDVYSITGIGTVPVGRVETGVLKPGDKVIFLPADKQGDVKSIEMHHEPLQQAEPGDNIGFNVRGIAKNDIKRGDVCGHLDSPPTVVRAFTAQIVVLNHPSVIAPGYKPVFHVHTAQVACKIDEIVRTLNPKDGTTLKDKPDFIKTGDIAIVKVIPDKPLVIEKVSEIPQLGRFAVRDMGQTVAAGQCIDLEKR</sequence>
<keyword id="KW-0963">Cytoplasm</keyword>
<keyword id="KW-0251">Elongation factor</keyword>
<keyword id="KW-0342">GTP-binding</keyword>
<keyword id="KW-0378">Hydrolase</keyword>
<keyword id="KW-0460">Magnesium</keyword>
<keyword id="KW-0479">Metal-binding</keyword>
<keyword id="KW-0547">Nucleotide-binding</keyword>
<keyword id="KW-0648">Protein biosynthesis</keyword>
<reference key="1">
    <citation type="journal article" date="2000" name="Proc. Natl. Acad. Sci. U.S.A.">
        <title>Archaeal adaptation to higher temperatures revealed by genomic sequence of Thermoplasma volcanium.</title>
        <authorList>
            <person name="Kawashima T."/>
            <person name="Amano N."/>
            <person name="Koike H."/>
            <person name="Makino S."/>
            <person name="Higuchi S."/>
            <person name="Kawashima-Ohya Y."/>
            <person name="Watanabe K."/>
            <person name="Yamazaki M."/>
            <person name="Kanehori K."/>
            <person name="Kawamoto T."/>
            <person name="Nunoshiba T."/>
            <person name="Yamamoto Y."/>
            <person name="Aramaki H."/>
            <person name="Makino K."/>
            <person name="Suzuki M."/>
        </authorList>
    </citation>
    <scope>NUCLEOTIDE SEQUENCE [LARGE SCALE GENOMIC DNA]</scope>
    <source>
        <strain>ATCC 51530 / DSM 4299 / JCM 9571 / NBRC 15438 / GSS1</strain>
    </source>
</reference>
<name>EF1A_THEVO</name>
<evidence type="ECO:0000250" key="1"/>
<evidence type="ECO:0000255" key="2">
    <source>
        <dbReference type="HAMAP-Rule" id="MF_00118"/>
    </source>
</evidence>
<evidence type="ECO:0000305" key="3"/>
<dbReference type="EC" id="3.6.5.3" evidence="2"/>
<dbReference type="EMBL" id="BA000011">
    <property type="protein sequence ID" value="BAB60221.1"/>
    <property type="status" value="ALT_INIT"/>
    <property type="molecule type" value="Genomic_DNA"/>
</dbReference>
<dbReference type="RefSeq" id="WP_010917309.1">
    <property type="nucleotide sequence ID" value="NC_002689.2"/>
</dbReference>
<dbReference type="SMR" id="Q979T1"/>
<dbReference type="STRING" id="273116.gene:9381875"/>
<dbReference type="PaxDb" id="273116-14325317"/>
<dbReference type="GeneID" id="1441191"/>
<dbReference type="KEGG" id="tvo:TVG1107082"/>
<dbReference type="eggNOG" id="arCOG01561">
    <property type="taxonomic scope" value="Archaea"/>
</dbReference>
<dbReference type="HOGENOM" id="CLU_007265_3_5_2"/>
<dbReference type="OrthoDB" id="371718at2157"/>
<dbReference type="PhylomeDB" id="Q979T1"/>
<dbReference type="Proteomes" id="UP000001017">
    <property type="component" value="Chromosome"/>
</dbReference>
<dbReference type="GO" id="GO:0005737">
    <property type="term" value="C:cytoplasm"/>
    <property type="evidence" value="ECO:0007669"/>
    <property type="project" value="UniProtKB-SubCell"/>
</dbReference>
<dbReference type="GO" id="GO:0005525">
    <property type="term" value="F:GTP binding"/>
    <property type="evidence" value="ECO:0007669"/>
    <property type="project" value="UniProtKB-UniRule"/>
</dbReference>
<dbReference type="GO" id="GO:0003924">
    <property type="term" value="F:GTPase activity"/>
    <property type="evidence" value="ECO:0007669"/>
    <property type="project" value="InterPro"/>
</dbReference>
<dbReference type="GO" id="GO:0003746">
    <property type="term" value="F:translation elongation factor activity"/>
    <property type="evidence" value="ECO:0007669"/>
    <property type="project" value="UniProtKB-UniRule"/>
</dbReference>
<dbReference type="CDD" id="cd01883">
    <property type="entry name" value="EF1_alpha"/>
    <property type="match status" value="1"/>
</dbReference>
<dbReference type="CDD" id="cd03693">
    <property type="entry name" value="EF1_alpha_II"/>
    <property type="match status" value="1"/>
</dbReference>
<dbReference type="CDD" id="cd03705">
    <property type="entry name" value="EF1_alpha_III"/>
    <property type="match status" value="1"/>
</dbReference>
<dbReference type="FunFam" id="2.40.30.10:FF:000003">
    <property type="entry name" value="Elongation factor 1-alpha"/>
    <property type="match status" value="1"/>
</dbReference>
<dbReference type="FunFam" id="2.40.30.10:FF:000005">
    <property type="entry name" value="Elongation factor 1-alpha"/>
    <property type="match status" value="1"/>
</dbReference>
<dbReference type="Gene3D" id="3.40.50.300">
    <property type="entry name" value="P-loop containing nucleotide triphosphate hydrolases"/>
    <property type="match status" value="1"/>
</dbReference>
<dbReference type="Gene3D" id="2.40.30.10">
    <property type="entry name" value="Translation factors"/>
    <property type="match status" value="2"/>
</dbReference>
<dbReference type="HAMAP" id="MF_00118_A">
    <property type="entry name" value="EF_Tu_A"/>
    <property type="match status" value="1"/>
</dbReference>
<dbReference type="InterPro" id="IPR004161">
    <property type="entry name" value="EFTu-like_2"/>
</dbReference>
<dbReference type="InterPro" id="IPR031157">
    <property type="entry name" value="G_TR_CS"/>
</dbReference>
<dbReference type="InterPro" id="IPR054696">
    <property type="entry name" value="GTP-eEF1A_C"/>
</dbReference>
<dbReference type="InterPro" id="IPR027417">
    <property type="entry name" value="P-loop_NTPase"/>
</dbReference>
<dbReference type="InterPro" id="IPR005225">
    <property type="entry name" value="Small_GTP-bd"/>
</dbReference>
<dbReference type="InterPro" id="IPR000795">
    <property type="entry name" value="T_Tr_GTP-bd_dom"/>
</dbReference>
<dbReference type="InterPro" id="IPR050100">
    <property type="entry name" value="TRAFAC_GTPase_members"/>
</dbReference>
<dbReference type="InterPro" id="IPR009000">
    <property type="entry name" value="Transl_B-barrel_sf"/>
</dbReference>
<dbReference type="InterPro" id="IPR009001">
    <property type="entry name" value="Transl_elong_EF1A/Init_IF2_C"/>
</dbReference>
<dbReference type="InterPro" id="IPR004539">
    <property type="entry name" value="Transl_elong_EF1A_euk/arc"/>
</dbReference>
<dbReference type="NCBIfam" id="TIGR00483">
    <property type="entry name" value="EF-1_alpha"/>
    <property type="match status" value="1"/>
</dbReference>
<dbReference type="NCBIfam" id="NF008969">
    <property type="entry name" value="PRK12317.1"/>
    <property type="match status" value="1"/>
</dbReference>
<dbReference type="NCBIfam" id="TIGR00231">
    <property type="entry name" value="small_GTP"/>
    <property type="match status" value="1"/>
</dbReference>
<dbReference type="PANTHER" id="PTHR23115">
    <property type="entry name" value="TRANSLATION FACTOR"/>
    <property type="match status" value="1"/>
</dbReference>
<dbReference type="Pfam" id="PF22594">
    <property type="entry name" value="GTP-eEF1A_C"/>
    <property type="match status" value="1"/>
</dbReference>
<dbReference type="Pfam" id="PF00009">
    <property type="entry name" value="GTP_EFTU"/>
    <property type="match status" value="1"/>
</dbReference>
<dbReference type="Pfam" id="PF03144">
    <property type="entry name" value="GTP_EFTU_D2"/>
    <property type="match status" value="1"/>
</dbReference>
<dbReference type="PRINTS" id="PR00315">
    <property type="entry name" value="ELONGATNFCT"/>
</dbReference>
<dbReference type="SUPFAM" id="SSF50465">
    <property type="entry name" value="EF-Tu/eEF-1alpha/eIF2-gamma C-terminal domain"/>
    <property type="match status" value="1"/>
</dbReference>
<dbReference type="SUPFAM" id="SSF52540">
    <property type="entry name" value="P-loop containing nucleoside triphosphate hydrolases"/>
    <property type="match status" value="1"/>
</dbReference>
<dbReference type="SUPFAM" id="SSF50447">
    <property type="entry name" value="Translation proteins"/>
    <property type="match status" value="1"/>
</dbReference>
<dbReference type="PROSITE" id="PS00301">
    <property type="entry name" value="G_TR_1"/>
    <property type="match status" value="1"/>
</dbReference>
<dbReference type="PROSITE" id="PS51722">
    <property type="entry name" value="G_TR_2"/>
    <property type="match status" value="1"/>
</dbReference>